<name>FPG_METNO</name>
<protein>
    <recommendedName>
        <fullName evidence="2">Formamidopyrimidine-DNA glycosylase</fullName>
        <shortName evidence="2">Fapy-DNA glycosylase</shortName>
        <ecNumber evidence="2">3.2.2.23</ecNumber>
    </recommendedName>
    <alternativeName>
        <fullName evidence="2">DNA-(apurinic or apyrimidinic site) lyase MutM</fullName>
        <shortName evidence="2">AP lyase MutM</shortName>
        <ecNumber evidence="2">4.2.99.18</ecNumber>
    </alternativeName>
</protein>
<comment type="function">
    <text evidence="2">Involved in base excision repair of DNA damaged by oxidation or by mutagenic agents. Acts as a DNA glycosylase that recognizes and removes damaged bases. Has a preference for oxidized purines, such as 7,8-dihydro-8-oxoguanine (8-oxoG). Has AP (apurinic/apyrimidinic) lyase activity and introduces nicks in the DNA strand. Cleaves the DNA backbone by beta-delta elimination to generate a single-strand break at the site of the removed base with both 3'- and 5'-phosphates.</text>
</comment>
<comment type="catalytic activity">
    <reaction evidence="2">
        <text>Hydrolysis of DNA containing ring-opened 7-methylguanine residues, releasing 2,6-diamino-4-hydroxy-5-(N-methyl)formamidopyrimidine.</text>
        <dbReference type="EC" id="3.2.2.23"/>
    </reaction>
</comment>
<comment type="catalytic activity">
    <reaction evidence="2">
        <text>2'-deoxyribonucleotide-(2'-deoxyribose 5'-phosphate)-2'-deoxyribonucleotide-DNA = a 3'-end 2'-deoxyribonucleotide-(2,3-dehydro-2,3-deoxyribose 5'-phosphate)-DNA + a 5'-end 5'-phospho-2'-deoxyribonucleoside-DNA + H(+)</text>
        <dbReference type="Rhea" id="RHEA:66592"/>
        <dbReference type="Rhea" id="RHEA-COMP:13180"/>
        <dbReference type="Rhea" id="RHEA-COMP:16897"/>
        <dbReference type="Rhea" id="RHEA-COMP:17067"/>
        <dbReference type="ChEBI" id="CHEBI:15378"/>
        <dbReference type="ChEBI" id="CHEBI:136412"/>
        <dbReference type="ChEBI" id="CHEBI:157695"/>
        <dbReference type="ChEBI" id="CHEBI:167181"/>
        <dbReference type="EC" id="4.2.99.18"/>
    </reaction>
</comment>
<comment type="cofactor">
    <cofactor evidence="2">
        <name>Zn(2+)</name>
        <dbReference type="ChEBI" id="CHEBI:29105"/>
    </cofactor>
    <text evidence="2">Binds 1 zinc ion per subunit.</text>
</comment>
<comment type="subunit">
    <text evidence="2">Monomer.</text>
</comment>
<comment type="similarity">
    <text evidence="2">Belongs to the FPG family.</text>
</comment>
<sequence length="297" mass="32238">MPELPEVETVRRGLEPALVGACFSHVHLARPDLRFPLPERFAARLTGQRVEALSRRAKYLVADLSSGEALIMHLGMSGRFDVVLPDGRQVSPGDFYLEGAGARAKHDHVSFALSNGARVTYNDVRRFGFMDLVPAAELATCRHFAGMGIEPLGNELSGEAVARLFRGRRTPLKAALLDQRLIAGLGNIYVCEALHRARLHPETPAGALADAAGRPTKAARLLAEVIRDVLTEAVAAGGSTLRDYVHTDGTKGAFQHAFRVYDREGLACTARGCRGVVRRVVQSGRSTFFCEVCQPAR</sequence>
<dbReference type="EC" id="3.2.2.23" evidence="2"/>
<dbReference type="EC" id="4.2.99.18" evidence="2"/>
<dbReference type="EMBL" id="CP001349">
    <property type="protein sequence ID" value="ACL61794.1"/>
    <property type="molecule type" value="Genomic_DNA"/>
</dbReference>
<dbReference type="RefSeq" id="WP_015933357.1">
    <property type="nucleotide sequence ID" value="NC_011894.1"/>
</dbReference>
<dbReference type="SMR" id="B8IIZ9"/>
<dbReference type="STRING" id="460265.Mnod_7054"/>
<dbReference type="KEGG" id="mno:Mnod_7054"/>
<dbReference type="eggNOG" id="COG0266">
    <property type="taxonomic scope" value="Bacteria"/>
</dbReference>
<dbReference type="HOGENOM" id="CLU_038423_1_1_5"/>
<dbReference type="OrthoDB" id="9800855at2"/>
<dbReference type="Proteomes" id="UP000008207">
    <property type="component" value="Chromosome"/>
</dbReference>
<dbReference type="GO" id="GO:0034039">
    <property type="term" value="F:8-oxo-7,8-dihydroguanine DNA N-glycosylase activity"/>
    <property type="evidence" value="ECO:0007669"/>
    <property type="project" value="TreeGrafter"/>
</dbReference>
<dbReference type="GO" id="GO:0140078">
    <property type="term" value="F:class I DNA-(apurinic or apyrimidinic site) endonuclease activity"/>
    <property type="evidence" value="ECO:0007669"/>
    <property type="project" value="UniProtKB-EC"/>
</dbReference>
<dbReference type="GO" id="GO:0003684">
    <property type="term" value="F:damaged DNA binding"/>
    <property type="evidence" value="ECO:0007669"/>
    <property type="project" value="InterPro"/>
</dbReference>
<dbReference type="GO" id="GO:0008270">
    <property type="term" value="F:zinc ion binding"/>
    <property type="evidence" value="ECO:0007669"/>
    <property type="project" value="UniProtKB-UniRule"/>
</dbReference>
<dbReference type="GO" id="GO:0006284">
    <property type="term" value="P:base-excision repair"/>
    <property type="evidence" value="ECO:0007669"/>
    <property type="project" value="InterPro"/>
</dbReference>
<dbReference type="CDD" id="cd08966">
    <property type="entry name" value="EcFpg-like_N"/>
    <property type="match status" value="1"/>
</dbReference>
<dbReference type="FunFam" id="1.10.8.50:FF:000003">
    <property type="entry name" value="Formamidopyrimidine-DNA glycosylase"/>
    <property type="match status" value="1"/>
</dbReference>
<dbReference type="Gene3D" id="1.10.8.50">
    <property type="match status" value="1"/>
</dbReference>
<dbReference type="Gene3D" id="3.20.190.10">
    <property type="entry name" value="MutM-like, N-terminal"/>
    <property type="match status" value="1"/>
</dbReference>
<dbReference type="HAMAP" id="MF_00103">
    <property type="entry name" value="Fapy_DNA_glycosyl"/>
    <property type="match status" value="1"/>
</dbReference>
<dbReference type="InterPro" id="IPR015886">
    <property type="entry name" value="DNA_glyclase/AP_lyase_DNA-bd"/>
</dbReference>
<dbReference type="InterPro" id="IPR020629">
    <property type="entry name" value="Formamido-pyr_DNA_Glyclase"/>
</dbReference>
<dbReference type="InterPro" id="IPR012319">
    <property type="entry name" value="FPG_cat"/>
</dbReference>
<dbReference type="InterPro" id="IPR035937">
    <property type="entry name" value="MutM-like_N-ter"/>
</dbReference>
<dbReference type="InterPro" id="IPR010979">
    <property type="entry name" value="Ribosomal_uS13-like_H2TH"/>
</dbReference>
<dbReference type="InterPro" id="IPR000214">
    <property type="entry name" value="Znf_DNA_glyclase/AP_lyase"/>
</dbReference>
<dbReference type="InterPro" id="IPR010663">
    <property type="entry name" value="Znf_FPG/IleRS"/>
</dbReference>
<dbReference type="NCBIfam" id="TIGR00577">
    <property type="entry name" value="fpg"/>
    <property type="match status" value="1"/>
</dbReference>
<dbReference type="NCBIfam" id="NF002211">
    <property type="entry name" value="PRK01103.1"/>
    <property type="match status" value="1"/>
</dbReference>
<dbReference type="PANTHER" id="PTHR22993">
    <property type="entry name" value="FORMAMIDOPYRIMIDINE-DNA GLYCOSYLASE"/>
    <property type="match status" value="1"/>
</dbReference>
<dbReference type="PANTHER" id="PTHR22993:SF9">
    <property type="entry name" value="FORMAMIDOPYRIMIDINE-DNA GLYCOSYLASE"/>
    <property type="match status" value="1"/>
</dbReference>
<dbReference type="Pfam" id="PF01149">
    <property type="entry name" value="Fapy_DNA_glyco"/>
    <property type="match status" value="1"/>
</dbReference>
<dbReference type="Pfam" id="PF06831">
    <property type="entry name" value="H2TH"/>
    <property type="match status" value="1"/>
</dbReference>
<dbReference type="Pfam" id="PF06827">
    <property type="entry name" value="zf-FPG_IleRS"/>
    <property type="match status" value="1"/>
</dbReference>
<dbReference type="SMART" id="SM00898">
    <property type="entry name" value="Fapy_DNA_glyco"/>
    <property type="match status" value="1"/>
</dbReference>
<dbReference type="SMART" id="SM01232">
    <property type="entry name" value="H2TH"/>
    <property type="match status" value="1"/>
</dbReference>
<dbReference type="SUPFAM" id="SSF57716">
    <property type="entry name" value="Glucocorticoid receptor-like (DNA-binding domain)"/>
    <property type="match status" value="1"/>
</dbReference>
<dbReference type="SUPFAM" id="SSF81624">
    <property type="entry name" value="N-terminal domain of MutM-like DNA repair proteins"/>
    <property type="match status" value="1"/>
</dbReference>
<dbReference type="SUPFAM" id="SSF46946">
    <property type="entry name" value="S13-like H2TH domain"/>
    <property type="match status" value="1"/>
</dbReference>
<dbReference type="PROSITE" id="PS51068">
    <property type="entry name" value="FPG_CAT"/>
    <property type="match status" value="1"/>
</dbReference>
<dbReference type="PROSITE" id="PS51066">
    <property type="entry name" value="ZF_FPG_2"/>
    <property type="match status" value="1"/>
</dbReference>
<reference key="1">
    <citation type="submission" date="2009-01" db="EMBL/GenBank/DDBJ databases">
        <title>Complete sequence of chromosome of Methylobacterium nodulans ORS 2060.</title>
        <authorList>
            <consortium name="US DOE Joint Genome Institute"/>
            <person name="Lucas S."/>
            <person name="Copeland A."/>
            <person name="Lapidus A."/>
            <person name="Glavina del Rio T."/>
            <person name="Dalin E."/>
            <person name="Tice H."/>
            <person name="Bruce D."/>
            <person name="Goodwin L."/>
            <person name="Pitluck S."/>
            <person name="Sims D."/>
            <person name="Brettin T."/>
            <person name="Detter J.C."/>
            <person name="Han C."/>
            <person name="Larimer F."/>
            <person name="Land M."/>
            <person name="Hauser L."/>
            <person name="Kyrpides N."/>
            <person name="Ivanova N."/>
            <person name="Marx C.J."/>
            <person name="Richardson P."/>
        </authorList>
    </citation>
    <scope>NUCLEOTIDE SEQUENCE [LARGE SCALE GENOMIC DNA]</scope>
    <source>
        <strain>LMG 21967 / CNCM I-2342 / ORS 2060</strain>
    </source>
</reference>
<accession>B8IIZ9</accession>
<evidence type="ECO:0000250" key="1"/>
<evidence type="ECO:0000255" key="2">
    <source>
        <dbReference type="HAMAP-Rule" id="MF_00103"/>
    </source>
</evidence>
<feature type="initiator methionine" description="Removed" evidence="1">
    <location>
        <position position="1"/>
    </location>
</feature>
<feature type="chain" id="PRO_1000118894" description="Formamidopyrimidine-DNA glycosylase">
    <location>
        <begin position="2"/>
        <end position="297"/>
    </location>
</feature>
<feature type="zinc finger region" description="FPG-type" evidence="2">
    <location>
        <begin position="259"/>
        <end position="295"/>
    </location>
</feature>
<feature type="active site" description="Schiff-base intermediate with DNA" evidence="2">
    <location>
        <position position="2"/>
    </location>
</feature>
<feature type="active site" description="Proton donor" evidence="2">
    <location>
        <position position="3"/>
    </location>
</feature>
<feature type="active site" description="Proton donor; for beta-elimination activity" evidence="2">
    <location>
        <position position="58"/>
    </location>
</feature>
<feature type="active site" description="Proton donor; for delta-elimination activity" evidence="2">
    <location>
        <position position="285"/>
    </location>
</feature>
<feature type="binding site" evidence="2">
    <location>
        <position position="106"/>
    </location>
    <ligand>
        <name>DNA</name>
        <dbReference type="ChEBI" id="CHEBI:16991"/>
    </ligand>
</feature>
<feature type="binding site" evidence="2">
    <location>
        <position position="125"/>
    </location>
    <ligand>
        <name>DNA</name>
        <dbReference type="ChEBI" id="CHEBI:16991"/>
    </ligand>
</feature>
<feature type="binding site" evidence="2">
    <location>
        <position position="168"/>
    </location>
    <ligand>
        <name>DNA</name>
        <dbReference type="ChEBI" id="CHEBI:16991"/>
    </ligand>
</feature>
<proteinExistence type="inferred from homology"/>
<organism>
    <name type="scientific">Methylobacterium nodulans (strain LMG 21967 / CNCM I-2342 / ORS 2060)</name>
    <dbReference type="NCBI Taxonomy" id="460265"/>
    <lineage>
        <taxon>Bacteria</taxon>
        <taxon>Pseudomonadati</taxon>
        <taxon>Pseudomonadota</taxon>
        <taxon>Alphaproteobacteria</taxon>
        <taxon>Hyphomicrobiales</taxon>
        <taxon>Methylobacteriaceae</taxon>
        <taxon>Methylobacterium</taxon>
    </lineage>
</organism>
<gene>
    <name evidence="2" type="primary">mutM</name>
    <name evidence="2" type="synonym">fpg</name>
    <name type="ordered locus">Mnod_7054</name>
</gene>
<keyword id="KW-0227">DNA damage</keyword>
<keyword id="KW-0234">DNA repair</keyword>
<keyword id="KW-0238">DNA-binding</keyword>
<keyword id="KW-0326">Glycosidase</keyword>
<keyword id="KW-0378">Hydrolase</keyword>
<keyword id="KW-0456">Lyase</keyword>
<keyword id="KW-0479">Metal-binding</keyword>
<keyword id="KW-0511">Multifunctional enzyme</keyword>
<keyword id="KW-1185">Reference proteome</keyword>
<keyword id="KW-0862">Zinc</keyword>
<keyword id="KW-0863">Zinc-finger</keyword>